<organism>
    <name type="scientific">Mycobacterium tuberculosis (strain CDC 1551 / Oshkosh)</name>
    <dbReference type="NCBI Taxonomy" id="83331"/>
    <lineage>
        <taxon>Bacteria</taxon>
        <taxon>Bacillati</taxon>
        <taxon>Actinomycetota</taxon>
        <taxon>Actinomycetes</taxon>
        <taxon>Mycobacteriales</taxon>
        <taxon>Mycobacteriaceae</taxon>
        <taxon>Mycobacterium</taxon>
        <taxon>Mycobacterium tuberculosis complex</taxon>
    </lineage>
</organism>
<comment type="function">
    <text evidence="2">Catalyzes the reversible interconversion of maltose and trehalose by transglucosylation. Also displays amylase activity, catalyzing the endohydrolysis of (1-&gt;4)-alpha-D-glucosidic linkages in glycogen and maltooligosaccharides such as maltoheptaose, to produce maltose which then can be converted to trehalose. TreS plays a key role in the utilization of trehalose for the production of glycogen and alpha-glucan via the TreS-Pep2 branch involved in the biosynthesis of maltose-1-phosphate (M1P). Might also function as a sensor and/or regulator of trehalose levels within the cell. Thus, when trehalose levels in the cell become dangerously low, TreS could expedite the conversion of glycogen to maltose via its amylase activity and then convert the maltose to trehalose; but this enzyme also could expedite or promote the conversion of trehalose to glycogen when cytoplasmic trehalose levels become too high.</text>
</comment>
<comment type="catalytic activity">
    <reaction evidence="2">
        <text>D-maltose = alpha,alpha-trehalose</text>
        <dbReference type="Rhea" id="RHEA:15145"/>
        <dbReference type="ChEBI" id="CHEBI:16551"/>
        <dbReference type="ChEBI" id="CHEBI:17306"/>
        <dbReference type="EC" id="5.4.99.16"/>
    </reaction>
</comment>
<comment type="catalytic activity">
    <reaction evidence="2">
        <text>Endohydrolysis of (1-&gt;4)-alpha-D-glucosidic linkages in polysaccharides containing three or more (1-&gt;4)-alpha-linked D-glucose units.</text>
        <dbReference type="EC" id="3.2.1.1"/>
    </reaction>
</comment>
<comment type="pathway">
    <text evidence="2">Glycan biosynthesis; glycogen biosynthesis.</text>
</comment>
<comment type="pathway">
    <text evidence="2">Capsule biogenesis; capsule polysaccharide biosynthesis.</text>
</comment>
<comment type="subunit">
    <text evidence="1">Homohexamer.</text>
</comment>
<comment type="miscellaneous">
    <text evidence="2">Maltose-1-phosphate (M1P), the building block required for alpha-glucan production, is generated by two alternative routes: the TreS-Pep2 branch and the GlgC-GlgM branch, however it seems that TreS-Pep2 branch provides most of M1P for the GlgE pathway in M.tuberculosis.</text>
</comment>
<comment type="similarity">
    <text evidence="5">Belongs to the glycosyl hydrolase 13 family. TreS subfamily.</text>
</comment>
<accession>P9WQ18</accession>
<accession>L0T5R2</accession>
<accession>O07176</accession>
<accession>Q7DAF7</accession>
<proteinExistence type="inferred from homology"/>
<name>TRES_MYCTO</name>
<dbReference type="EC" id="3.2.1.1" evidence="2"/>
<dbReference type="EC" id="5.4.99.16" evidence="2"/>
<dbReference type="EMBL" id="AE000516">
    <property type="protein sequence ID" value="AAK44358.1"/>
    <property type="molecule type" value="Genomic_DNA"/>
</dbReference>
<dbReference type="PIR" id="G70983">
    <property type="entry name" value="G70983"/>
</dbReference>
<dbReference type="RefSeq" id="WP_003400893.1">
    <property type="nucleotide sequence ID" value="NZ_KK341227.1"/>
</dbReference>
<dbReference type="EMDB" id="EMD-42478"/>
<dbReference type="SMR" id="P9WQ18"/>
<dbReference type="BindingDB" id="P9WQ18"/>
<dbReference type="CAZy" id="GH13">
    <property type="family name" value="Glycoside Hydrolase Family 13"/>
</dbReference>
<dbReference type="GeneID" id="45424092"/>
<dbReference type="KEGG" id="mtc:MT0134"/>
<dbReference type="PATRIC" id="fig|83331.31.peg.144"/>
<dbReference type="HOGENOM" id="CLU_006462_2_1_11"/>
<dbReference type="UniPathway" id="UPA00164"/>
<dbReference type="UniPathway" id="UPA00934"/>
<dbReference type="Proteomes" id="UP000001020">
    <property type="component" value="Chromosome"/>
</dbReference>
<dbReference type="GO" id="GO:0004556">
    <property type="term" value="F:alpha-amylase activity"/>
    <property type="evidence" value="ECO:0007669"/>
    <property type="project" value="UniProtKB-EC"/>
</dbReference>
<dbReference type="GO" id="GO:0047471">
    <property type="term" value="F:maltose alpha-D-glucosyltransferase activity"/>
    <property type="evidence" value="ECO:0007669"/>
    <property type="project" value="UniProtKB-EC"/>
</dbReference>
<dbReference type="GO" id="GO:0046872">
    <property type="term" value="F:metal ion binding"/>
    <property type="evidence" value="ECO:0007669"/>
    <property type="project" value="UniProtKB-KW"/>
</dbReference>
<dbReference type="GO" id="GO:0045227">
    <property type="term" value="P:capsule polysaccharide biosynthetic process"/>
    <property type="evidence" value="ECO:0007669"/>
    <property type="project" value="UniProtKB-UniPathway"/>
</dbReference>
<dbReference type="GO" id="GO:0005978">
    <property type="term" value="P:glycogen biosynthetic process"/>
    <property type="evidence" value="ECO:0007669"/>
    <property type="project" value="UniProtKB-UniPathway"/>
</dbReference>
<dbReference type="GO" id="GO:0000272">
    <property type="term" value="P:polysaccharide catabolic process"/>
    <property type="evidence" value="ECO:0007669"/>
    <property type="project" value="UniProtKB-KW"/>
</dbReference>
<dbReference type="CDD" id="cd11334">
    <property type="entry name" value="AmyAc_TreS"/>
    <property type="match status" value="1"/>
</dbReference>
<dbReference type="FunFam" id="3.20.20.80:FF:000055">
    <property type="entry name" value="Trehalose synthase"/>
    <property type="match status" value="1"/>
</dbReference>
<dbReference type="FunFam" id="2.60.40.1180:FF:000054">
    <property type="entry name" value="Trehalose synthase/amylase TreS"/>
    <property type="match status" value="1"/>
</dbReference>
<dbReference type="Gene3D" id="3.20.20.80">
    <property type="entry name" value="Glycosidases"/>
    <property type="match status" value="1"/>
</dbReference>
<dbReference type="Gene3D" id="2.60.40.1180">
    <property type="entry name" value="Golgi alpha-mannosidase II"/>
    <property type="match status" value="1"/>
</dbReference>
<dbReference type="Gene3D" id="3.90.400.10">
    <property type="entry name" value="Oligo-1,6-glucosidase, Domain 2"/>
    <property type="match status" value="1"/>
</dbReference>
<dbReference type="InterPro" id="IPR006047">
    <property type="entry name" value="Glyco_hydro_13_cat_dom"/>
</dbReference>
<dbReference type="InterPro" id="IPR013780">
    <property type="entry name" value="Glyco_hydro_b"/>
</dbReference>
<dbReference type="InterPro" id="IPR017853">
    <property type="entry name" value="Glycoside_hydrolase_SF"/>
</dbReference>
<dbReference type="InterPro" id="IPR032091">
    <property type="entry name" value="Malt_amylase-like_C"/>
</dbReference>
<dbReference type="InterPro" id="IPR045857">
    <property type="entry name" value="O16G_dom_2"/>
</dbReference>
<dbReference type="InterPro" id="IPR012810">
    <property type="entry name" value="TreS/a-amylase_N"/>
</dbReference>
<dbReference type="NCBIfam" id="TIGR02456">
    <property type="entry name" value="treS_nterm"/>
    <property type="match status" value="1"/>
</dbReference>
<dbReference type="PANTHER" id="PTHR10357">
    <property type="entry name" value="ALPHA-AMYLASE FAMILY MEMBER"/>
    <property type="match status" value="1"/>
</dbReference>
<dbReference type="PANTHER" id="PTHR10357:SF219">
    <property type="entry name" value="MALTOSE ALPHA-D-GLUCOSYLTRANSFERASE"/>
    <property type="match status" value="1"/>
</dbReference>
<dbReference type="Pfam" id="PF00128">
    <property type="entry name" value="Alpha-amylase"/>
    <property type="match status" value="1"/>
</dbReference>
<dbReference type="Pfam" id="PF16657">
    <property type="entry name" value="Malt_amylase_C"/>
    <property type="match status" value="1"/>
</dbReference>
<dbReference type="SMART" id="SM00642">
    <property type="entry name" value="Aamy"/>
    <property type="match status" value="1"/>
</dbReference>
<dbReference type="SUPFAM" id="SSF51445">
    <property type="entry name" value="(Trans)glycosidases"/>
    <property type="match status" value="1"/>
</dbReference>
<dbReference type="SUPFAM" id="SSF51011">
    <property type="entry name" value="Glycosyl hydrolase domain"/>
    <property type="match status" value="1"/>
</dbReference>
<evidence type="ECO:0000250" key="1">
    <source>
        <dbReference type="UniProtKB" id="A0R6E0"/>
    </source>
</evidence>
<evidence type="ECO:0000250" key="2">
    <source>
        <dbReference type="UniProtKB" id="P9WQ19"/>
    </source>
</evidence>
<evidence type="ECO:0000250" key="3">
    <source>
        <dbReference type="UniProtKB" id="Q9ZEU2"/>
    </source>
</evidence>
<evidence type="ECO:0000256" key="4">
    <source>
        <dbReference type="SAM" id="MobiDB-lite"/>
    </source>
</evidence>
<evidence type="ECO:0000305" key="5"/>
<gene>
    <name evidence="2" type="primary">treS</name>
    <name type="ordered locus">MT0134</name>
</gene>
<protein>
    <recommendedName>
        <fullName evidence="2">Trehalose synthase/amylase TreS</fullName>
        <ecNumber evidence="2">3.2.1.1</ecNumber>
        <ecNumber evidence="2">5.4.99.16</ecNumber>
    </recommendedName>
    <alternativeName>
        <fullName evidence="2">Maltose alpha-D-glucosyltransferase</fullName>
        <shortName evidence="2">MTase</shortName>
    </alternativeName>
</protein>
<reference key="1">
    <citation type="journal article" date="2002" name="J. Bacteriol.">
        <title>Whole-genome comparison of Mycobacterium tuberculosis clinical and laboratory strains.</title>
        <authorList>
            <person name="Fleischmann R.D."/>
            <person name="Alland D."/>
            <person name="Eisen J.A."/>
            <person name="Carpenter L."/>
            <person name="White O."/>
            <person name="Peterson J.D."/>
            <person name="DeBoy R.T."/>
            <person name="Dodson R.J."/>
            <person name="Gwinn M.L."/>
            <person name="Haft D.H."/>
            <person name="Hickey E.K."/>
            <person name="Kolonay J.F."/>
            <person name="Nelson W.C."/>
            <person name="Umayam L.A."/>
            <person name="Ermolaeva M.D."/>
            <person name="Salzberg S.L."/>
            <person name="Delcher A."/>
            <person name="Utterback T.R."/>
            <person name="Weidman J.F."/>
            <person name="Khouri H.M."/>
            <person name="Gill J."/>
            <person name="Mikula A."/>
            <person name="Bishai W."/>
            <person name="Jacobs W.R. Jr."/>
            <person name="Venter J.C."/>
            <person name="Fraser C.M."/>
        </authorList>
    </citation>
    <scope>NUCLEOTIDE SEQUENCE [LARGE SCALE GENOMIC DNA]</scope>
    <source>
        <strain>CDC 1551 / Oshkosh</strain>
    </source>
</reference>
<keyword id="KW-0106">Calcium</keyword>
<keyword id="KW-0972">Capsule biogenesis/degradation</keyword>
<keyword id="KW-0119">Carbohydrate metabolism</keyword>
<keyword id="KW-0320">Glycogen biosynthesis</keyword>
<keyword id="KW-0321">Glycogen metabolism</keyword>
<keyword id="KW-0326">Glycosidase</keyword>
<keyword id="KW-0378">Hydrolase</keyword>
<keyword id="KW-0413">Isomerase</keyword>
<keyword id="KW-0479">Metal-binding</keyword>
<keyword id="KW-0624">Polysaccharide degradation</keyword>
<keyword id="KW-1185">Reference proteome</keyword>
<sequence>MNEAEHSVEHPPVQGSHVEGGVVEHPDAKDFGSAAALPADPTWFKHAVFYEVLVRAFFDASADGSGDLRGLIDRLDYLQWLGIDCIWLPPFYDSPLRDGGYDIRDFYKVLPEFGTVDDFVALVDAAHRRGIRIITDLVMNHTSESHPWFQESRRDPDGPYGDYYVWSDTSERYTDARIIFVDTEESNWSFDPVRRQFYWHRFFSHQPDLNYDNPAVQEAMIDVIRFWLGLGIDGFRLDAVPYLFEREGTNCENLPETHAFLKRVRKVVDDEFPGRVLLAEANQWPGDVVEYFGDPNTGGDECHMAFHFPLMPRIFMAVRRESRFPISEIIAQTPPIPDMAQWGIFLRNHDELTLEMVTDEERDYMYAEYAKDPRMKANVGIRRRLAPLLDNDRNQIELFTALLLSLPGSPVLYYGDEIGMGDVIWLGDRDGVRIPMQWTPDRNAGFSTANPGRLYLPPSQDPVYGYQAVNVEAQRDTSTSLLNFTRTMLAVRRRHPAFAVGAFQELGGSNPSVLAYVRQVAGDDGDTVLCVNNLSRFPQPIELDLQQWTNYTPVELTGHVEFPRIGQVPYLLTLPGHGFYWFQLTTHEVGAPPTCGGERRL</sequence>
<feature type="chain" id="PRO_0000426853" description="Trehalose synthase/amylase TreS">
    <location>
        <begin position="1"/>
        <end position="601"/>
    </location>
</feature>
<feature type="region of interest" description="Disordered" evidence="4">
    <location>
        <begin position="1"/>
        <end position="21"/>
    </location>
</feature>
<feature type="active site" description="Nucleophile" evidence="1">
    <location>
        <position position="238"/>
    </location>
</feature>
<feature type="active site" description="Proton donor" evidence="3">
    <location>
        <position position="280"/>
    </location>
</feature>
<feature type="binding site" evidence="3">
    <location>
        <position position="98"/>
    </location>
    <ligand>
        <name>substrate</name>
    </ligand>
</feature>
<feature type="binding site" evidence="1">
    <location>
        <position position="140"/>
    </location>
    <ligand>
        <name>Ca(2+)</name>
        <dbReference type="ChEBI" id="CHEBI:29108"/>
    </ligand>
</feature>
<feature type="binding site" evidence="3">
    <location>
        <position position="141"/>
    </location>
    <ligand>
        <name>substrate</name>
    </ligand>
</feature>
<feature type="binding site" evidence="3">
    <location>
        <position position="206"/>
    </location>
    <ligand>
        <name>substrate</name>
    </ligand>
</feature>
<feature type="binding site" evidence="1">
    <location>
        <position position="208"/>
    </location>
    <ligand>
        <name>Ca(2+)</name>
        <dbReference type="ChEBI" id="CHEBI:29108"/>
    </ligand>
</feature>
<feature type="binding site" evidence="3">
    <location>
        <position position="236"/>
    </location>
    <ligand>
        <name>substrate</name>
    </ligand>
</feature>
<feature type="binding site" evidence="1">
    <location>
        <position position="242"/>
    </location>
    <ligand>
        <name>Ca(2+)</name>
        <dbReference type="ChEBI" id="CHEBI:29108"/>
    </ligand>
</feature>
<feature type="binding site" evidence="1">
    <location>
        <position position="243"/>
    </location>
    <ligand>
        <name>Ca(2+)</name>
        <dbReference type="ChEBI" id="CHEBI:29108"/>
    </ligand>
</feature>
<feature type="binding site" evidence="1">
    <location>
        <position position="245"/>
    </location>
    <ligand>
        <name>Ca(2+)</name>
        <dbReference type="ChEBI" id="CHEBI:29108"/>
    </ligand>
</feature>
<feature type="binding site" evidence="3">
    <location>
        <position position="349"/>
    </location>
    <ligand>
        <name>substrate</name>
    </ligand>
</feature>
<feature type="binding site" evidence="3">
    <location>
        <position position="350"/>
    </location>
    <ligand>
        <name>substrate</name>
    </ligand>
</feature>